<dbReference type="EC" id="3.6.4.-" evidence="1"/>
<dbReference type="EMBL" id="DS572695">
    <property type="protein sequence ID" value="EGY13365.1"/>
    <property type="molecule type" value="Genomic_DNA"/>
</dbReference>
<dbReference type="RefSeq" id="XP_009649719.1">
    <property type="nucleotide sequence ID" value="XM_009651424.1"/>
</dbReference>
<dbReference type="SMR" id="G2WR64"/>
<dbReference type="STRING" id="498257.G2WR64"/>
<dbReference type="EnsemblFungi" id="EGY13365">
    <property type="protein sequence ID" value="EGY13365"/>
    <property type="gene ID" value="VDAG_00047"/>
</dbReference>
<dbReference type="GeneID" id="20701510"/>
<dbReference type="KEGG" id="vda:VDAG_00047"/>
<dbReference type="eggNOG" id="KOG0298">
    <property type="taxonomic scope" value="Eukaryota"/>
</dbReference>
<dbReference type="eggNOG" id="KOG4439">
    <property type="taxonomic scope" value="Eukaryota"/>
</dbReference>
<dbReference type="HOGENOM" id="CLU_000796_0_0_1"/>
<dbReference type="InParanoid" id="G2WR64"/>
<dbReference type="OMA" id="SMIPYIT"/>
<dbReference type="OrthoDB" id="6108at1028384"/>
<dbReference type="Proteomes" id="UP000001611">
    <property type="component" value="Chromosome 2"/>
</dbReference>
<dbReference type="GO" id="GO:0005694">
    <property type="term" value="C:chromosome"/>
    <property type="evidence" value="ECO:0007669"/>
    <property type="project" value="UniProtKB-SubCell"/>
</dbReference>
<dbReference type="GO" id="GO:0005634">
    <property type="term" value="C:nucleus"/>
    <property type="evidence" value="ECO:0007669"/>
    <property type="project" value="UniProtKB-SubCell"/>
</dbReference>
<dbReference type="GO" id="GO:0005524">
    <property type="term" value="F:ATP binding"/>
    <property type="evidence" value="ECO:0007669"/>
    <property type="project" value="UniProtKB-KW"/>
</dbReference>
<dbReference type="GO" id="GO:0008094">
    <property type="term" value="F:ATP-dependent activity, acting on DNA"/>
    <property type="evidence" value="ECO:0007669"/>
    <property type="project" value="TreeGrafter"/>
</dbReference>
<dbReference type="GO" id="GO:0003677">
    <property type="term" value="F:DNA binding"/>
    <property type="evidence" value="ECO:0007669"/>
    <property type="project" value="UniProtKB-KW"/>
</dbReference>
<dbReference type="GO" id="GO:0016787">
    <property type="term" value="F:hydrolase activity"/>
    <property type="evidence" value="ECO:0007669"/>
    <property type="project" value="UniProtKB-KW"/>
</dbReference>
<dbReference type="GO" id="GO:0008168">
    <property type="term" value="F:methyltransferase activity"/>
    <property type="evidence" value="ECO:0007669"/>
    <property type="project" value="UniProtKB-KW"/>
</dbReference>
<dbReference type="GO" id="GO:0008270">
    <property type="term" value="F:zinc ion binding"/>
    <property type="evidence" value="ECO:0007669"/>
    <property type="project" value="UniProtKB-KW"/>
</dbReference>
<dbReference type="GO" id="GO:0006281">
    <property type="term" value="P:DNA repair"/>
    <property type="evidence" value="ECO:0007669"/>
    <property type="project" value="TreeGrafter"/>
</dbReference>
<dbReference type="GO" id="GO:0032259">
    <property type="term" value="P:methylation"/>
    <property type="evidence" value="ECO:0007669"/>
    <property type="project" value="UniProtKB-KW"/>
</dbReference>
<dbReference type="CDD" id="cd18793">
    <property type="entry name" value="SF2_C_SNF"/>
    <property type="match status" value="1"/>
</dbReference>
<dbReference type="Gene3D" id="3.40.50.300">
    <property type="entry name" value="P-loop containing nucleotide triphosphate hydrolases"/>
    <property type="match status" value="1"/>
</dbReference>
<dbReference type="Gene3D" id="3.40.50.10810">
    <property type="entry name" value="Tandem AAA-ATPase domain"/>
    <property type="match status" value="1"/>
</dbReference>
<dbReference type="Gene3D" id="3.40.50.150">
    <property type="entry name" value="Vaccinia Virus protein VP39"/>
    <property type="match status" value="1"/>
</dbReference>
<dbReference type="InterPro" id="IPR014001">
    <property type="entry name" value="Helicase_ATP-bd"/>
</dbReference>
<dbReference type="InterPro" id="IPR001650">
    <property type="entry name" value="Helicase_C-like"/>
</dbReference>
<dbReference type="InterPro" id="IPR027417">
    <property type="entry name" value="P-loop_NTPase"/>
</dbReference>
<dbReference type="InterPro" id="IPR029063">
    <property type="entry name" value="SAM-dependent_MTases_sf"/>
</dbReference>
<dbReference type="InterPro" id="IPR038718">
    <property type="entry name" value="SNF2-like_sf"/>
</dbReference>
<dbReference type="InterPro" id="IPR049730">
    <property type="entry name" value="SNF2/RAD54-like_C"/>
</dbReference>
<dbReference type="InterPro" id="IPR000330">
    <property type="entry name" value="SNF2_N"/>
</dbReference>
<dbReference type="InterPro" id="IPR050628">
    <property type="entry name" value="SNF2_RAD54_helicase_TF"/>
</dbReference>
<dbReference type="InterPro" id="IPR001841">
    <property type="entry name" value="Znf_RING"/>
</dbReference>
<dbReference type="InterPro" id="IPR017907">
    <property type="entry name" value="Znf_RING_CS"/>
</dbReference>
<dbReference type="PANTHER" id="PTHR45626:SF26">
    <property type="entry name" value="FAMILY HELICASE, PUTATIVE (AFU_ORTHOLOGUE AFUA_2G09120)-RELATED"/>
    <property type="match status" value="1"/>
</dbReference>
<dbReference type="PANTHER" id="PTHR45626">
    <property type="entry name" value="TRANSCRIPTION TERMINATION FACTOR 2-RELATED"/>
    <property type="match status" value="1"/>
</dbReference>
<dbReference type="Pfam" id="PF00271">
    <property type="entry name" value="Helicase_C"/>
    <property type="match status" value="1"/>
</dbReference>
<dbReference type="Pfam" id="PF00176">
    <property type="entry name" value="SNF2-rel_dom"/>
    <property type="match status" value="1"/>
</dbReference>
<dbReference type="SMART" id="SM00487">
    <property type="entry name" value="DEXDc"/>
    <property type="match status" value="1"/>
</dbReference>
<dbReference type="SMART" id="SM00184">
    <property type="entry name" value="RING"/>
    <property type="match status" value="1"/>
</dbReference>
<dbReference type="SUPFAM" id="SSF52540">
    <property type="entry name" value="P-loop containing nucleoside triphosphate hydrolases"/>
    <property type="match status" value="2"/>
</dbReference>
<dbReference type="SUPFAM" id="SSF57850">
    <property type="entry name" value="RING/U-box"/>
    <property type="match status" value="1"/>
</dbReference>
<dbReference type="SUPFAM" id="SSF53335">
    <property type="entry name" value="S-adenosyl-L-methionine-dependent methyltransferases"/>
    <property type="match status" value="1"/>
</dbReference>
<dbReference type="PROSITE" id="PS51192">
    <property type="entry name" value="HELICASE_ATP_BIND_1"/>
    <property type="match status" value="1"/>
</dbReference>
<dbReference type="PROSITE" id="PS51194">
    <property type="entry name" value="HELICASE_CTER"/>
    <property type="match status" value="1"/>
</dbReference>
<dbReference type="PROSITE" id="PS00518">
    <property type="entry name" value="ZF_RING_1"/>
    <property type="match status" value="1"/>
</dbReference>
<dbReference type="PROSITE" id="PS50089">
    <property type="entry name" value="ZF_RING_2"/>
    <property type="match status" value="1"/>
</dbReference>
<sequence>MAQKPQQFDVLGDTGARVDRPRDSLALIFKRALELGLDDVSQDGGVRFTVGTMCSGTDAPILALRELQDAALAMGYNHLFDFDHQFSVEIEAYKQAFIERNSKPSGEIYRDVIQVSDPSRKDAITAHGSLAPIPAAPDLLVAGSSCVDFSKLNNKRDILAKHSVLSRLYEEAKNTKNGLDFGTVTPQSQSHDVRMALQDVRDSFHTEGESVKTFGSILQFIYDQRPKLIILENVSHAPWRAFTHFWLPLVGYVALSMKVDSKNFLVPQTRTRGYLVAVDQWHYGTELSTRMARLWSSMMESSNWFPNQYPEVHKFLLSSMDQRILEARAIEERKIAENMTRDVEARMCAYDHAKVRRQQGLGPDRPFTQRDGRGNLLPRDTSWQAYIRGTSSRVQDLLDITWLSERKKGGRDLNYKAKYLDLGEGVERLKTQIGIVGCVLPDGDLFATDQGRPILGVEALSLQGLPIDRIRTSVETQADLHDMAGNAMTTTVVGAATLCILIAERQVTRSSGFHDGLPLLDNGASTRTQHLKHLFAIRQSDRNGAADGAFALLQHCPSYSTAQKDQAAVAHLIMIHQKGRRYCPCAGYRKHNPATGLMICTLCNQVRCVTCAGNPAHAFETLLTGPLWSWDETIHALRGILPNRFALTGGHGIPQDDKDVKSLCSSLYTTEKENGNITTRLRELRKCLGAVYYLDHFDNSQVIVATYVSTCGRIELSIGLDQVVWYLYLPEPLEPGSFNQQPAPPIARAILDKSADNVFPSCLSWEIFFLQPVPVVLSLEPQSDSTFRCFVTEFNGQPIKSYPIIPMAATELMVGVEGVYEFSQTCGTPFDLLYSRRTAGSEPSSAPCYLFLDTKHTTEPEEDSWVMSQSVSKLEPGTHREVLCKFSSSWKEQEQKLRQHGTPQTVQCEIPGLWRSVHQTNGALMNISMSDVHLAPDRMTAETSEDLHVIIPGALNFPDVAQAPIPVLQLRIDIPDLPFPVHLLPQLWKTDGEIFKECAKETDSGEKWMRVSDHHHKDALSLISFALGALKANHLPREFTVGILERAGAVCQSLDADFPNPKVHLLWEGFKVKKLFDDSEAAQQLAESYSKRPLPLELDVQIVRADQPRHTGDLYSGRAGGNIAQEPELIIRILFNPTALAHRAWLHIPRDGLIRGIRRDVMQDGHIGFAVDVEFVDPSLKMIEPFEACLSQDVISSATYASAIQLPSFDSCGVQLRPDQIQSVQWMIEKESSNSCFVEREVEEFLVPSSSIRLRSHAEVVNRARGGVLAHDVGFGKTIATLALIDHQRNQSNERSVTERYAWTQERHCHLKATLIVCPPQIVDQWRDEIERFLGSENWNVVVINAKTPFHRGILEMADIVILSTAFIHSTAFVQALTRVAGAANFHDASSASSREFNIWYREAVTDLEDSCQCYADNNRNNGALAKHISLRTQERKASFEKARAACIVESRRKDQKSKATARTQRAKKKSKKPRRTAAAAAESDHSAESDSDSAMDDRKRKVATSHVVSDFKDATVLQMYSFDRVVLDEFSYENKSTAAFVANCVASSKWILSGTPPMADLSQVCAIADLVNMHVARPEASVPRSFPSITRGPRLDKTTRGEAMRQYADPKSAQFALERHEQARTFLEHKMTRRETDISHIGVTEQVVVCRLDPVSSVVYAQLQQVLYDARWDIEEVPGDMRAIIDWLLQQTGNNKASKARENLRMSWHNTIQSLLVQSSTNLSAYGENMKKLGMDVRAGAVSGITVLTSMRTIYQRLQARSKAMIKSQFDMLMYVVDQVQMSGLLTMTNAKGRDKTKQDKAMYYQDHLDDFIQRFTAARPWSFGDAEIRDDFWKGGNGVYGAIDWWKLTEEDVEAMDEDELKHVETKLVCFKASYNPESQMEATGQQLEESVCDLLNANVLDQYHEAEPEKVAANIGLASATLLDVYWKDTAKSKDFEFGNKFRPYRPKLNEEETDRGTSHDQATNRMAMALQSVQAGIEEYIRQARRLRVLGIVQDLFAFAQALEAGHQPNAPTCSVCGSQDNTEMKDLSLFITCGHLLCSGCVAAHEHQHGQAESTTGEVLCPVDSCSAMARSALVPCTQLISATAASTLDFEGKSAKVMKILDVIRTDVKDDEKVLLFVSNKKLKAQLSDALEEDDNVDVYMTTGTHHDTDAIRSFKEPNEDGRKKVLVQSLMSEESAGTNLTEANHVMFAAPLHTDRRNHYMYMRQARGRAIRFGQTRPVRVYHFVTAHTMEVDVLEHRLGHKLLIPEGGDRMPLDDLDYKLYALDTRAASRGPPSATKEASAAPTISSTLRRIRPYIDEVETRKLLDSQEYDEWQDRLDVSPSAATKQTPWFRSQVVEQSADEVYDDDVEVGN</sequence>
<evidence type="ECO:0000250" key="1">
    <source>
        <dbReference type="UniProtKB" id="J9VI03"/>
    </source>
</evidence>
<evidence type="ECO:0000255" key="2">
    <source>
        <dbReference type="PROSITE-ProRule" id="PRU00175"/>
    </source>
</evidence>
<evidence type="ECO:0000255" key="3">
    <source>
        <dbReference type="PROSITE-ProRule" id="PRU00541"/>
    </source>
</evidence>
<evidence type="ECO:0000255" key="4">
    <source>
        <dbReference type="PROSITE-ProRule" id="PRU00542"/>
    </source>
</evidence>
<evidence type="ECO:0000255" key="5">
    <source>
        <dbReference type="PROSITE-ProRule" id="PRU01016"/>
    </source>
</evidence>
<evidence type="ECO:0000256" key="6">
    <source>
        <dbReference type="SAM" id="MobiDB-lite"/>
    </source>
</evidence>
<evidence type="ECO:0000269" key="7">
    <source>
    </source>
</evidence>
<evidence type="ECO:0000303" key="8">
    <source>
    </source>
</evidence>
<evidence type="ECO:0000305" key="9"/>
<evidence type="ECO:0000305" key="10">
    <source>
    </source>
</evidence>
<evidence type="ECO:0000312" key="11">
    <source>
        <dbReference type="EMBL" id="EGY13365.1"/>
    </source>
</evidence>
<evidence type="ECO:0000312" key="12">
    <source>
        <dbReference type="Proteomes" id="UP000001611"/>
    </source>
</evidence>
<accession>G2WR64</accession>
<gene>
    <name evidence="9" type="primary">DMT5</name>
    <name evidence="8" type="synonym">DNMT5</name>
    <name evidence="11" type="ORF">VDAG_00047</name>
</gene>
<comment type="function">
    <text evidence="7">May play a role in cytosine methylation at palindromic 5'-CG-3' and 5'-C[ACT]G-3' sites in DNA.</text>
</comment>
<comment type="catalytic activity">
    <reaction evidence="1">
        <text>a 2'-deoxycytidine in DNA + S-adenosyl-L-methionine + ATP + H2O = a 5-methyl-2'-deoxycytidine in DNA + S-adenosyl-L-homocysteine + ADP + phosphate + 2 H(+)</text>
        <dbReference type="Rhea" id="RHEA:68984"/>
        <dbReference type="Rhea" id="RHEA-COMP:11369"/>
        <dbReference type="Rhea" id="RHEA-COMP:11370"/>
        <dbReference type="ChEBI" id="CHEBI:15377"/>
        <dbReference type="ChEBI" id="CHEBI:15378"/>
        <dbReference type="ChEBI" id="CHEBI:30616"/>
        <dbReference type="ChEBI" id="CHEBI:43474"/>
        <dbReference type="ChEBI" id="CHEBI:57856"/>
        <dbReference type="ChEBI" id="CHEBI:59789"/>
        <dbReference type="ChEBI" id="CHEBI:85452"/>
        <dbReference type="ChEBI" id="CHEBI:85454"/>
        <dbReference type="ChEBI" id="CHEBI:456216"/>
    </reaction>
    <physiologicalReaction direction="left-to-right" evidence="1">
        <dbReference type="Rhea" id="RHEA:68985"/>
    </physiologicalReaction>
</comment>
<comment type="subcellular location">
    <subcellularLocation>
        <location evidence="10">Nucleus</location>
    </subcellularLocation>
    <subcellularLocation>
        <location evidence="10">Chromosome</location>
    </subcellularLocation>
</comment>
<comment type="disruption phenotype">
    <text evidence="7">Very mildly decreases methylation of the fifth carbon of cytosine (5mC) in DNA (PubMed:33941240). No apparent cell population growth phenotype, sexual reproduction phenotype, virulence phenotype, or sensitivity to osmotic, oxidative or genotoxic stress (PubMed:33941240).</text>
</comment>
<comment type="similarity">
    <text evidence="5">In the N-terminal section; belongs to the class I-like SAM-binding methyltransferase superfamily. C5-methyltransferase family.</text>
</comment>
<comment type="similarity">
    <text evidence="9">In the C-terminal section; belongs to the SNF2/RAD54 helicase family.</text>
</comment>
<keyword id="KW-0067">ATP-binding</keyword>
<keyword id="KW-0158">Chromosome</keyword>
<keyword id="KW-0238">DNA-binding</keyword>
<keyword id="KW-0378">Hydrolase</keyword>
<keyword id="KW-0479">Metal-binding</keyword>
<keyword id="KW-0489">Methyltransferase</keyword>
<keyword id="KW-0547">Nucleotide-binding</keyword>
<keyword id="KW-0539">Nucleus</keyword>
<keyword id="KW-1185">Reference proteome</keyword>
<keyword id="KW-0949">S-adenosyl-L-methionine</keyword>
<keyword id="KW-0808">Transferase</keyword>
<keyword id="KW-0862">Zinc</keyword>
<keyword id="KW-0863">Zinc-finger</keyword>
<name>DMT5_VERDV</name>
<feature type="chain" id="PRO_0000454227" description="DNA (cytosine-5-)-methyltransferase DMT5">
    <location>
        <begin position="1"/>
        <end position="2360"/>
    </location>
</feature>
<feature type="domain" description="SAM-dependent MTase C5-type" evidence="5">
    <location>
        <begin position="48"/>
        <end position="507"/>
    </location>
</feature>
<feature type="domain" description="Helicase ATP-binding" evidence="3">
    <location>
        <begin position="1258"/>
        <end position="1575"/>
    </location>
</feature>
<feature type="domain" description="Helicase C-terminal" evidence="4">
    <location>
        <begin position="2102"/>
        <end position="2267"/>
    </location>
</feature>
<feature type="zinc finger region" description="RING-type; degenerate" evidence="2">
    <location>
        <begin position="2018"/>
        <end position="2070"/>
    </location>
</feature>
<feature type="region of interest" description="Disordered" evidence="6">
    <location>
        <begin position="1451"/>
        <end position="1498"/>
    </location>
</feature>
<feature type="compositionally biased region" description="Basic residues" evidence="6">
    <location>
        <begin position="1465"/>
        <end position="1476"/>
    </location>
</feature>
<feature type="active site" evidence="5">
    <location>
        <position position="146"/>
    </location>
</feature>
<feature type="binding site" evidence="3">
    <location>
        <begin position="1271"/>
        <end position="1278"/>
    </location>
    <ligand>
        <name>ATP</name>
        <dbReference type="ChEBI" id="CHEBI:30616"/>
    </ligand>
</feature>
<reference evidence="12" key="1">
    <citation type="journal article" date="2011" name="PLoS Pathog.">
        <title>Comparative genomics yields insights into niche adaptation of plant vascular wilt pathogens.</title>
        <authorList>
            <person name="Klosterman S.J."/>
            <person name="Subbarao K.V."/>
            <person name="Kang S."/>
            <person name="Veronese P."/>
            <person name="Gold S.E."/>
            <person name="Thomma B.P.H.J."/>
            <person name="Chen Z."/>
            <person name="Henrissat B."/>
            <person name="Lee Y.-H."/>
            <person name="Park J."/>
            <person name="Garcia-Pedrajas M.D."/>
            <person name="Barbara D.J."/>
            <person name="Anchieta A."/>
            <person name="de Jonge R."/>
            <person name="Santhanam P."/>
            <person name="Maruthachalam K."/>
            <person name="Atallah Z."/>
            <person name="Amyotte S.G."/>
            <person name="Paz Z."/>
            <person name="Inderbitzin P."/>
            <person name="Hayes R.J."/>
            <person name="Heiman D.I."/>
            <person name="Young S."/>
            <person name="Zeng Q."/>
            <person name="Engels R."/>
            <person name="Galagan J."/>
            <person name="Cuomo C.A."/>
            <person name="Dobinson K.F."/>
            <person name="Ma L.-J."/>
        </authorList>
    </citation>
    <scope>NUCLEOTIDE SEQUENCE [LARGE SCALE GENOMIC DNA]</scope>
    <source>
        <strain evidence="12">VdLs.17 / ATCC MYA-4575 / FGSC 10137</strain>
    </source>
</reference>
<reference evidence="9" key="2">
    <citation type="journal article" date="2021" name="Epigenetics Chromatin">
        <title>Three putative DNA methyltransferases of Verticillium dahliae differentially contribute to DNA methylation that is dispensable for growth, development and virulence.</title>
        <authorList>
            <person name="Kramer H.M."/>
            <person name="Cook D.E."/>
            <person name="van den Berg G.C.M."/>
            <person name="Seidl M.F."/>
            <person name="Thomma B.P.H.J."/>
        </authorList>
    </citation>
    <scope>FUNCTION</scope>
    <scope>SUBCELLULAR LOCATION</scope>
    <scope>DISRUPTION PHENOTYPE</scope>
    <source>
        <strain evidence="7">JR2</strain>
    </source>
</reference>
<organism evidence="12">
    <name type="scientific">Verticillium dahliae (strain VdLs.17 / ATCC MYA-4575 / FGSC 10137)</name>
    <name type="common">Verticillium wilt</name>
    <dbReference type="NCBI Taxonomy" id="498257"/>
    <lineage>
        <taxon>Eukaryota</taxon>
        <taxon>Fungi</taxon>
        <taxon>Dikarya</taxon>
        <taxon>Ascomycota</taxon>
        <taxon>Pezizomycotina</taxon>
        <taxon>Sordariomycetes</taxon>
        <taxon>Hypocreomycetidae</taxon>
        <taxon>Glomerellales</taxon>
        <taxon>Plectosphaerellaceae</taxon>
        <taxon>Verticillium</taxon>
    </lineage>
</organism>
<protein>
    <recommendedName>
        <fullName evidence="9">DNA (cytosine-5-)-methyltransferase DMT5</fullName>
        <ecNumber evidence="1">3.6.4.-</ecNumber>
    </recommendedName>
</protein>
<proteinExistence type="inferred from homology"/>